<sequence>MSKIIGIDLGTTNSAVAVLEGTESKIIANPEGNRTTPSVVSFKNGEIIVGDAAKRQAVTNPDTVISIKSKMGTSEKVSANGKEYTPQEISAMILQYLKGYAEDYLGEKVTKAVITVPAYFNDAQRQATKDAGKIAGLEVERIVNEPTAAALAYGLDKTDKEEKILVFDLGGGTFDVSILELGDGVFDVLSTAGDNKLGGDDFDQKIIDHLVAEFKKENGIDLSTDKMAMQRLKDAAEKAKKDLSGVTSTQISLPFITAGEAGPLHLEMTLTRAKFDDLTRDLVERTKVPVRQALSDAGLSLSEIDEVILVGGSTRIPAVVEAVKAETGKEPNKSVNPDEVVAMGAAIQGGVITGDVKDVVLLDVTPLSLGIETMGGVFTKLIDRNTTIPTSKSQVFSTAADNQPAVDIHVLQGERPMAADNKTLGRFQLTDIPAAPRGIPQIEVTFDIDKNGIVSVKAKDLGTQKEQTIVIQSNSGLTDEEIDRMMKDAEANAEADKKRKEEVDLRNEVDQAIFATEKTIKETEGKGFDAERDAAQAALDDLKKAQEDNNLDDMKAKLEALNEKAQGLAVKLYEQAAAAQQAQEGAEGAQATGNAGDDVVDGEFTEK</sequence>
<comment type="function">
    <text evidence="1">Acts as a chaperone.</text>
</comment>
<comment type="induction">
    <text evidence="1">By stress conditions e.g. heat shock.</text>
</comment>
<comment type="similarity">
    <text evidence="1">Belongs to the heat shock protein 70 family.</text>
</comment>
<name>DNAK_STRZT</name>
<reference key="1">
    <citation type="journal article" date="2010" name="Genome Biol.">
        <title>Structure and dynamics of the pan-genome of Streptococcus pneumoniae and closely related species.</title>
        <authorList>
            <person name="Donati C."/>
            <person name="Hiller N.L."/>
            <person name="Tettelin H."/>
            <person name="Muzzi A."/>
            <person name="Croucher N.J."/>
            <person name="Angiuoli S.V."/>
            <person name="Oggioni M."/>
            <person name="Dunning Hotopp J.C."/>
            <person name="Hu F.Z."/>
            <person name="Riley D.R."/>
            <person name="Covacci A."/>
            <person name="Mitchell T.J."/>
            <person name="Bentley S.D."/>
            <person name="Kilian M."/>
            <person name="Ehrlich G.D."/>
            <person name="Rappuoli R."/>
            <person name="Moxon E.R."/>
            <person name="Masignani V."/>
        </authorList>
    </citation>
    <scope>NUCLEOTIDE SEQUENCE [LARGE SCALE GENOMIC DNA]</scope>
    <source>
        <strain>Taiwan19F-14</strain>
    </source>
</reference>
<feature type="chain" id="PRO_1000133167" description="Chaperone protein DnaK">
    <location>
        <begin position="1"/>
        <end position="607"/>
    </location>
</feature>
<feature type="region of interest" description="Disordered" evidence="2">
    <location>
        <begin position="580"/>
        <end position="607"/>
    </location>
</feature>
<feature type="compositionally biased region" description="Low complexity" evidence="2">
    <location>
        <begin position="580"/>
        <end position="591"/>
    </location>
</feature>
<feature type="compositionally biased region" description="Acidic residues" evidence="2">
    <location>
        <begin position="598"/>
        <end position="607"/>
    </location>
</feature>
<feature type="modified residue" description="Phosphothreonine; by autocatalysis" evidence="1">
    <location>
        <position position="173"/>
    </location>
</feature>
<dbReference type="EMBL" id="CP000921">
    <property type="protein sequence ID" value="ACO23549.1"/>
    <property type="molecule type" value="Genomic_DNA"/>
</dbReference>
<dbReference type="RefSeq" id="WP_000034662.1">
    <property type="nucleotide sequence ID" value="NC_012469.1"/>
</dbReference>
<dbReference type="SMR" id="C1CQ18"/>
<dbReference type="GeneID" id="45654055"/>
<dbReference type="KEGG" id="snt:SPT_0550"/>
<dbReference type="HOGENOM" id="CLU_005965_2_4_9"/>
<dbReference type="GO" id="GO:0005524">
    <property type="term" value="F:ATP binding"/>
    <property type="evidence" value="ECO:0007669"/>
    <property type="project" value="UniProtKB-UniRule"/>
</dbReference>
<dbReference type="GO" id="GO:0140662">
    <property type="term" value="F:ATP-dependent protein folding chaperone"/>
    <property type="evidence" value="ECO:0007669"/>
    <property type="project" value="InterPro"/>
</dbReference>
<dbReference type="GO" id="GO:0051082">
    <property type="term" value="F:unfolded protein binding"/>
    <property type="evidence" value="ECO:0007669"/>
    <property type="project" value="InterPro"/>
</dbReference>
<dbReference type="CDD" id="cd10234">
    <property type="entry name" value="ASKHA_NBD_HSP70_DnaK-like"/>
    <property type="match status" value="1"/>
</dbReference>
<dbReference type="FunFam" id="2.60.34.10:FF:000014">
    <property type="entry name" value="Chaperone protein DnaK HSP70"/>
    <property type="match status" value="1"/>
</dbReference>
<dbReference type="FunFam" id="1.20.1270.10:FF:000004">
    <property type="entry name" value="Molecular chaperone DnaK"/>
    <property type="match status" value="1"/>
</dbReference>
<dbReference type="FunFam" id="3.30.420.40:FF:000071">
    <property type="entry name" value="Molecular chaperone DnaK"/>
    <property type="match status" value="1"/>
</dbReference>
<dbReference type="FunFam" id="3.90.640.10:FF:000003">
    <property type="entry name" value="Molecular chaperone DnaK"/>
    <property type="match status" value="1"/>
</dbReference>
<dbReference type="Gene3D" id="1.20.1270.10">
    <property type="match status" value="1"/>
</dbReference>
<dbReference type="Gene3D" id="3.30.420.40">
    <property type="match status" value="2"/>
</dbReference>
<dbReference type="Gene3D" id="3.90.640.10">
    <property type="entry name" value="Actin, Chain A, domain 4"/>
    <property type="match status" value="1"/>
</dbReference>
<dbReference type="Gene3D" id="2.60.34.10">
    <property type="entry name" value="Substrate Binding Domain Of DNAk, Chain A, domain 1"/>
    <property type="match status" value="1"/>
</dbReference>
<dbReference type="HAMAP" id="MF_00332">
    <property type="entry name" value="DnaK"/>
    <property type="match status" value="1"/>
</dbReference>
<dbReference type="InterPro" id="IPR043129">
    <property type="entry name" value="ATPase_NBD"/>
</dbReference>
<dbReference type="InterPro" id="IPR012725">
    <property type="entry name" value="Chaperone_DnaK"/>
</dbReference>
<dbReference type="InterPro" id="IPR018181">
    <property type="entry name" value="Heat_shock_70_CS"/>
</dbReference>
<dbReference type="InterPro" id="IPR029048">
    <property type="entry name" value="HSP70_C_sf"/>
</dbReference>
<dbReference type="InterPro" id="IPR029047">
    <property type="entry name" value="HSP70_peptide-bd_sf"/>
</dbReference>
<dbReference type="InterPro" id="IPR013126">
    <property type="entry name" value="Hsp_70_fam"/>
</dbReference>
<dbReference type="NCBIfam" id="NF001413">
    <property type="entry name" value="PRK00290.1"/>
    <property type="match status" value="1"/>
</dbReference>
<dbReference type="NCBIfam" id="TIGR02350">
    <property type="entry name" value="prok_dnaK"/>
    <property type="match status" value="1"/>
</dbReference>
<dbReference type="PANTHER" id="PTHR19375">
    <property type="entry name" value="HEAT SHOCK PROTEIN 70KDA"/>
    <property type="match status" value="1"/>
</dbReference>
<dbReference type="Pfam" id="PF00012">
    <property type="entry name" value="HSP70"/>
    <property type="match status" value="1"/>
</dbReference>
<dbReference type="PRINTS" id="PR00301">
    <property type="entry name" value="HEATSHOCK70"/>
</dbReference>
<dbReference type="SUPFAM" id="SSF53067">
    <property type="entry name" value="Actin-like ATPase domain"/>
    <property type="match status" value="2"/>
</dbReference>
<dbReference type="SUPFAM" id="SSF100934">
    <property type="entry name" value="Heat shock protein 70kD (HSP70), C-terminal subdomain"/>
    <property type="match status" value="1"/>
</dbReference>
<dbReference type="SUPFAM" id="SSF100920">
    <property type="entry name" value="Heat shock protein 70kD (HSP70), peptide-binding domain"/>
    <property type="match status" value="1"/>
</dbReference>
<dbReference type="PROSITE" id="PS00297">
    <property type="entry name" value="HSP70_1"/>
    <property type="match status" value="1"/>
</dbReference>
<dbReference type="PROSITE" id="PS00329">
    <property type="entry name" value="HSP70_2"/>
    <property type="match status" value="1"/>
</dbReference>
<dbReference type="PROSITE" id="PS01036">
    <property type="entry name" value="HSP70_3"/>
    <property type="match status" value="1"/>
</dbReference>
<gene>
    <name evidence="1" type="primary">dnaK</name>
    <name type="ordered locus">SPT_0550</name>
</gene>
<proteinExistence type="inferred from homology"/>
<keyword id="KW-0067">ATP-binding</keyword>
<keyword id="KW-0143">Chaperone</keyword>
<keyword id="KW-0547">Nucleotide-binding</keyword>
<keyword id="KW-0597">Phosphoprotein</keyword>
<keyword id="KW-0346">Stress response</keyword>
<accession>C1CQ18</accession>
<evidence type="ECO:0000255" key="1">
    <source>
        <dbReference type="HAMAP-Rule" id="MF_00332"/>
    </source>
</evidence>
<evidence type="ECO:0000256" key="2">
    <source>
        <dbReference type="SAM" id="MobiDB-lite"/>
    </source>
</evidence>
<organism>
    <name type="scientific">Streptococcus pneumoniae (strain Taiwan19F-14)</name>
    <dbReference type="NCBI Taxonomy" id="487213"/>
    <lineage>
        <taxon>Bacteria</taxon>
        <taxon>Bacillati</taxon>
        <taxon>Bacillota</taxon>
        <taxon>Bacilli</taxon>
        <taxon>Lactobacillales</taxon>
        <taxon>Streptococcaceae</taxon>
        <taxon>Streptococcus</taxon>
    </lineage>
</organism>
<protein>
    <recommendedName>
        <fullName evidence="1">Chaperone protein DnaK</fullName>
    </recommendedName>
    <alternativeName>
        <fullName evidence="1">HSP70</fullName>
    </alternativeName>
    <alternativeName>
        <fullName evidence="1">Heat shock 70 kDa protein</fullName>
    </alternativeName>
    <alternativeName>
        <fullName evidence="1">Heat shock protein 70</fullName>
    </alternativeName>
</protein>